<dbReference type="EMBL" id="L22579">
    <property type="protein sequence ID" value="AAA60855.1"/>
    <property type="molecule type" value="Genomic_DNA"/>
</dbReference>
<dbReference type="PIR" id="T28545">
    <property type="entry name" value="T28545"/>
</dbReference>
<dbReference type="RefSeq" id="NP_042151.1">
    <property type="nucleotide sequence ID" value="NC_001611.1"/>
</dbReference>
<dbReference type="GeneID" id="1486519"/>
<dbReference type="KEGG" id="vg:1486519"/>
<dbReference type="Proteomes" id="UP000119805">
    <property type="component" value="Segment"/>
</dbReference>
<dbReference type="GO" id="GO:0044423">
    <property type="term" value="C:virion component"/>
    <property type="evidence" value="ECO:0007669"/>
    <property type="project" value="UniProtKB-KW"/>
</dbReference>
<dbReference type="InterPro" id="IPR004972">
    <property type="entry name" value="P4B"/>
</dbReference>
<dbReference type="Pfam" id="PF03292">
    <property type="entry name" value="Pox_P4B"/>
    <property type="match status" value="1"/>
</dbReference>
<accession>P0DOM6</accession>
<accession>P33818</accession>
<reference key="1">
    <citation type="journal article" date="1993" name="Nature">
        <title>Potential virulence determinants in terminal regions of variola smallpox virus genome.</title>
        <authorList>
            <person name="Massung R.F."/>
            <person name="Esposito J.J."/>
            <person name="Liu L.I."/>
            <person name="Qi J."/>
            <person name="Utterback T.R."/>
            <person name="Knight J.C."/>
            <person name="Aubin L."/>
            <person name="Yuran T.E."/>
            <person name="Parsons J.M."/>
            <person name="Loparev V.N."/>
            <person name="Selivanov N.A."/>
            <person name="Cavallaro K.F."/>
            <person name="Kerlavage A.R."/>
            <person name="Mahy B.W.J."/>
            <person name="Venter J.C."/>
        </authorList>
    </citation>
    <scope>NUCLEOTIDE SEQUENCE [GENOMIC DNA]</scope>
    <source>
        <strain>Bangladesh-1975</strain>
    </source>
</reference>
<organismHost>
    <name type="scientific">Homo sapiens</name>
    <name type="common">Human</name>
    <dbReference type="NCBI Taxonomy" id="9606"/>
</organismHost>
<comment type="function">
    <text evidence="2">Major component of the virion core that undergoes proteolytic processing during the immature virion (IV) to mature virion (MV) transition. Essential for the formation of a structurally normal core.</text>
</comment>
<comment type="subcellular location">
    <subcellularLocation>
        <location evidence="2">Virion</location>
    </subcellularLocation>
    <text evidence="2">Localizes to the virion core wall, the mature protein accounts for 11% of the dry mass of the virion.</text>
</comment>
<comment type="PTM">
    <text evidence="2">The 73-kDa precursor is cleaved to a mature protein of 60 kDa during virion maturation. Proteolytic cleavage of major core proteins OPG129, OPG136, and OPG098, which occurs at a late stage of core formation, is required for production of infectious mature virions (MV).</text>
</comment>
<comment type="similarity">
    <text evidence="4">Belongs to the orthopoxvirus OPG129 family.</text>
</comment>
<keyword id="KW-0946">Virion</keyword>
<protein>
    <recommendedName>
        <fullName>Major core protein OPG129</fullName>
    </recommendedName>
    <alternativeName>
        <fullName>Virion core protein 4b</fullName>
        <shortName>p4b</shortName>
    </alternativeName>
</protein>
<feature type="propeptide" id="PRO_0000448145" evidence="1">
    <location>
        <begin position="1"/>
        <end position="61"/>
    </location>
</feature>
<feature type="chain" id="PRO_0000448146" description="Major core protein OPG129">
    <location>
        <begin position="62"/>
        <end position="644"/>
    </location>
</feature>
<feature type="region of interest" description="Disordered" evidence="3">
    <location>
        <begin position="61"/>
        <end position="80"/>
    </location>
</feature>
<gene>
    <name type="primary">OPG129</name>
    <name type="ORF">A3L</name>
</gene>
<evidence type="ECO:0000250" key="1"/>
<evidence type="ECO:0000250" key="2">
    <source>
        <dbReference type="UniProtKB" id="P06440"/>
    </source>
</evidence>
<evidence type="ECO:0000256" key="3">
    <source>
        <dbReference type="SAM" id="MobiDB-lite"/>
    </source>
</evidence>
<evidence type="ECO:0000305" key="4"/>
<organism>
    <name type="scientific">Variola virus</name>
    <dbReference type="NCBI Taxonomy" id="10255"/>
    <lineage>
        <taxon>Viruses</taxon>
        <taxon>Varidnaviria</taxon>
        <taxon>Bamfordvirae</taxon>
        <taxon>Nucleocytoviricota</taxon>
        <taxon>Pokkesviricetes</taxon>
        <taxon>Chitovirales</taxon>
        <taxon>Poxviridae</taxon>
        <taxon>Chordopoxvirinae</taxon>
        <taxon>Orthopoxvirus</taxon>
    </lineage>
</organism>
<proteinExistence type="inferred from homology"/>
<sequence length="644" mass="72650">MEAVVNSDVFLTSNTGLKSSYTNQTLSLVDEDHIHTSDKSLSCSVCNSLSQIVDDDFISAGARNQRTKPKRAGNDQAQQTTKKDCMVSIDEVASTHDWSTRLRNDGNAIAKYLTTNKYDTSNFTIQDMLNIMNKLNIVRTNRNELFQLLTHVKSTLNNASVSVKCTHPLVLIHSRASPRIGDQLKELDKIYSPSNHHILLSTTRFQSMHFTDMSSSQDLSFIYRKPETNYYIHPILMALFGIKLPALENAYVHGDTYSLIQQLYEFRRVKSYNYMLLVNRLTEDNPIVITGVSDLISTEIQRANMHTMIRKAIMNIRMGIFYCNDDDAVDPHLMKIIHTGCSQVMTDEEQILASILSIVGFRPTLVSVARPINGISYDMKLQAAPYIVVNPMKMITTSDSPISINSKDIYSMAFDGNSGRVVFAPPNIGYGRCSGVTHIDSLGTNVMGSAVHSPVIVNGAMMFYVERRQNKNMFGGECYTGFRSLIDDTPIDVSPEIMLNGIMYRLKSAVCYKLGDQFFDCGSSDIFLKGHYTILFTENGPWMYDPLSVFNPGARNARLMRALKNQYKKLSMDSDDGFYEWLNGDGSVFAASKQQMLMNHVANFDDDLLTMEEAMSMISRHCCILIYAQDYDQYISARHITELF</sequence>
<name>PG129_VARV</name>